<accession>Q7T0P4</accession>
<protein>
    <recommendedName>
        <fullName>POC1 centriolar protein homolog A</fullName>
    </recommendedName>
    <alternativeName>
        <fullName>Pat-interacting protein 2</fullName>
        <shortName>Pix2</shortName>
        <shortName>xPix2</shortName>
    </alternativeName>
    <alternativeName>
        <fullName>WD repeat-containing protein 51A</fullName>
    </alternativeName>
</protein>
<feature type="chain" id="PRO_0000420364" description="POC1 centriolar protein homolog A">
    <location>
        <begin position="1"/>
        <end position="441"/>
    </location>
</feature>
<feature type="repeat" description="WD 1">
    <location>
        <begin position="16"/>
        <end position="55"/>
    </location>
</feature>
<feature type="repeat" description="WD 2">
    <location>
        <begin position="58"/>
        <end position="97"/>
    </location>
</feature>
<feature type="repeat" description="WD 3">
    <location>
        <begin position="100"/>
        <end position="139"/>
    </location>
</feature>
<feature type="repeat" description="WD 4">
    <location>
        <begin position="142"/>
        <end position="181"/>
    </location>
</feature>
<feature type="repeat" description="WD 5">
    <location>
        <begin position="184"/>
        <end position="223"/>
    </location>
</feature>
<feature type="repeat" description="WD 6">
    <location>
        <begin position="226"/>
        <end position="265"/>
    </location>
</feature>
<feature type="repeat" description="WD 7">
    <location>
        <begin position="268"/>
        <end position="307"/>
    </location>
</feature>
<feature type="region of interest" description="Disordered" evidence="3">
    <location>
        <begin position="347"/>
        <end position="376"/>
    </location>
</feature>
<feature type="coiled-coil region" evidence="2">
    <location>
        <begin position="400"/>
        <end position="427"/>
    </location>
</feature>
<feature type="compositionally biased region" description="Basic and acidic residues" evidence="3">
    <location>
        <begin position="348"/>
        <end position="361"/>
    </location>
</feature>
<gene>
    <name type="primary">poc1a</name>
    <name type="synonym">wdr51a</name>
</gene>
<proteinExistence type="evidence at protein level"/>
<evidence type="ECO:0000250" key="1"/>
<evidence type="ECO:0000255" key="2"/>
<evidence type="ECO:0000256" key="3">
    <source>
        <dbReference type="SAM" id="MobiDB-lite"/>
    </source>
</evidence>
<evidence type="ECO:0000269" key="4">
    <source>
    </source>
</evidence>
<evidence type="ECO:0000305" key="5"/>
<reference key="1">
    <citation type="submission" date="2003-08" db="EMBL/GenBank/DDBJ databases">
        <authorList>
            <consortium name="NIH - Xenopus Gene Collection (XGC) project"/>
        </authorList>
    </citation>
    <scope>NUCLEOTIDE SEQUENCE [LARGE SCALE MRNA]</scope>
    <source>
        <tissue>Ovary</tissue>
    </source>
</reference>
<reference key="2">
    <citation type="journal article" date="2008" name="Exp. Cell Res.">
        <title>Pix1 and Pix2 are novel WD40 microtubule-associated proteins that colocalize with mitochondria in Xenopus germ plasm and centrosomes in human cells.</title>
        <authorList>
            <person name="Hames R.S."/>
            <person name="Hames R."/>
            <person name="Prosser S.L."/>
            <person name="Euteneuer U."/>
            <person name="Lopes C.A."/>
            <person name="Moore W."/>
            <person name="Woodland H.R."/>
            <person name="Fry A.M."/>
        </authorList>
    </citation>
    <scope>INTERACTION WITH PAT</scope>
    <scope>SUBCELLULAR LOCATION</scope>
</reference>
<comment type="function">
    <text evidence="1">May play an important role in centriole assembly and/or stability and ciliogenesis.</text>
</comment>
<comment type="subunit">
    <text evidence="4">Interacts with pat.</text>
</comment>
<comment type="subcellular location">
    <subcellularLocation>
        <location evidence="4">Cytoplasm</location>
        <location evidence="4">Cytoskeleton</location>
    </subcellularLocation>
    <text>Colocalizes with mitochondria in cortical germ plasm islands. The mitochondrial localization may be microtubule-dependent.</text>
</comment>
<comment type="similarity">
    <text evidence="5">Belongs to the WD repeat POC1 family.</text>
</comment>
<comment type="sequence caution" evidence="5">
    <conflict type="erroneous initiation">
        <sequence resource="EMBL-CDS" id="AAH56099"/>
    </conflict>
    <text>Truncated N-terminus.</text>
</comment>
<name>POC1A_XENLA</name>
<sequence>MAGQSEDPSLERHFKGHRDTVTAVDFNANTKQLASGSMDSCLMVWNMKTQMRAYRFVGHKDAILSVDFSPSGHLIASASRDKTVRLWVPSVKGESTAFKAHTGTVRSVSFSGDGQSLVTASDDKTIKVWTVHRQKFLFSLNQHINWVRCAKFSPDGRLIVSASDDKTIKLWDKTSRECIQSFCEHGGFVNFVDFHPSGTCIAAAATDNTVKVWDIRMNKLIQHYQVHSGVVNSLSFHPSGNYLITASNDSTLKVLDLLEGRLLYTLHGHQGPVTCVKFSREGDFFASGGSDEQVMVWKTNFDAGSYPDLLKYRQNDTFPSGGDYTSIVQPADVHQPARNAHVTQAADLEPHITEMSVKDRSSPLSYTSRSVDQHHPQAEDGNLQTVASTLEHIVGQLDILTRTVGILEQRLSLTEDKLKECIEQQQATVPPSHSGTKKSSF</sequence>
<dbReference type="EMBL" id="BC056099">
    <property type="protein sequence ID" value="AAH56099.1"/>
    <property type="status" value="ALT_INIT"/>
    <property type="molecule type" value="mRNA"/>
</dbReference>
<dbReference type="RefSeq" id="NP_001079883.2">
    <property type="nucleotide sequence ID" value="NM_001086414.1"/>
</dbReference>
<dbReference type="SMR" id="Q7T0P4"/>
<dbReference type="DNASU" id="379573"/>
<dbReference type="GeneID" id="379573"/>
<dbReference type="KEGG" id="xla:379573"/>
<dbReference type="AGR" id="Xenbase:XB-GENE-5767146"/>
<dbReference type="CTD" id="379573"/>
<dbReference type="Xenbase" id="XB-GENE-5767146">
    <property type="gene designation" value="poc1a.L"/>
</dbReference>
<dbReference type="OrthoDB" id="10264588at2759"/>
<dbReference type="Proteomes" id="UP000186698">
    <property type="component" value="Chromosome 4L"/>
</dbReference>
<dbReference type="Bgee" id="379573">
    <property type="expression patterns" value="Expressed in egg cell and 15 other cell types or tissues"/>
</dbReference>
<dbReference type="GO" id="GO:0005814">
    <property type="term" value="C:centriole"/>
    <property type="evidence" value="ECO:0000318"/>
    <property type="project" value="GO_Central"/>
</dbReference>
<dbReference type="GO" id="GO:0036064">
    <property type="term" value="C:ciliary basal body"/>
    <property type="evidence" value="ECO:0000318"/>
    <property type="project" value="GO_Central"/>
</dbReference>
<dbReference type="GO" id="GO:0005737">
    <property type="term" value="C:cytoplasm"/>
    <property type="evidence" value="ECO:0007669"/>
    <property type="project" value="UniProtKB-KW"/>
</dbReference>
<dbReference type="GO" id="GO:0060271">
    <property type="term" value="P:cilium assembly"/>
    <property type="evidence" value="ECO:0000318"/>
    <property type="project" value="GO_Central"/>
</dbReference>
<dbReference type="CDD" id="cd00200">
    <property type="entry name" value="WD40"/>
    <property type="match status" value="1"/>
</dbReference>
<dbReference type="FunFam" id="2.130.10.10:FF:000567">
    <property type="entry name" value="POC1 centriolar protein homolog A"/>
    <property type="match status" value="1"/>
</dbReference>
<dbReference type="FunFam" id="2.130.10.10:FF:000235">
    <property type="entry name" value="POC1 centriolar protein homolog B"/>
    <property type="match status" value="1"/>
</dbReference>
<dbReference type="Gene3D" id="2.130.10.10">
    <property type="entry name" value="YVTN repeat-like/Quinoprotein amine dehydrogenase"/>
    <property type="match status" value="3"/>
</dbReference>
<dbReference type="InterPro" id="IPR020472">
    <property type="entry name" value="G-protein_beta_WD-40_rep"/>
</dbReference>
<dbReference type="InterPro" id="IPR015943">
    <property type="entry name" value="WD40/YVTN_repeat-like_dom_sf"/>
</dbReference>
<dbReference type="InterPro" id="IPR019775">
    <property type="entry name" value="WD40_repeat_CS"/>
</dbReference>
<dbReference type="InterPro" id="IPR036322">
    <property type="entry name" value="WD40_repeat_dom_sf"/>
</dbReference>
<dbReference type="InterPro" id="IPR001680">
    <property type="entry name" value="WD40_rpt"/>
</dbReference>
<dbReference type="InterPro" id="IPR050505">
    <property type="entry name" value="WDR55_POC1"/>
</dbReference>
<dbReference type="PANTHER" id="PTHR44019:SF2">
    <property type="entry name" value="POC1 CENTRIOLAR PROTEIN HOMOLOG A"/>
    <property type="match status" value="1"/>
</dbReference>
<dbReference type="PANTHER" id="PTHR44019">
    <property type="entry name" value="WD REPEAT-CONTAINING PROTEIN 55"/>
    <property type="match status" value="1"/>
</dbReference>
<dbReference type="Pfam" id="PF00400">
    <property type="entry name" value="WD40"/>
    <property type="match status" value="7"/>
</dbReference>
<dbReference type="PRINTS" id="PR00320">
    <property type="entry name" value="GPROTEINBRPT"/>
</dbReference>
<dbReference type="SMART" id="SM00320">
    <property type="entry name" value="WD40"/>
    <property type="match status" value="7"/>
</dbReference>
<dbReference type="SUPFAM" id="SSF50978">
    <property type="entry name" value="WD40 repeat-like"/>
    <property type="match status" value="1"/>
</dbReference>
<dbReference type="PROSITE" id="PS00678">
    <property type="entry name" value="WD_REPEATS_1"/>
    <property type="match status" value="2"/>
</dbReference>
<dbReference type="PROSITE" id="PS50082">
    <property type="entry name" value="WD_REPEATS_2"/>
    <property type="match status" value="7"/>
</dbReference>
<dbReference type="PROSITE" id="PS50294">
    <property type="entry name" value="WD_REPEATS_REGION"/>
    <property type="match status" value="1"/>
</dbReference>
<keyword id="KW-0175">Coiled coil</keyword>
<keyword id="KW-0963">Cytoplasm</keyword>
<keyword id="KW-0206">Cytoskeleton</keyword>
<keyword id="KW-1185">Reference proteome</keyword>
<keyword id="KW-0677">Repeat</keyword>
<keyword id="KW-0853">WD repeat</keyword>
<organism>
    <name type="scientific">Xenopus laevis</name>
    <name type="common">African clawed frog</name>
    <dbReference type="NCBI Taxonomy" id="8355"/>
    <lineage>
        <taxon>Eukaryota</taxon>
        <taxon>Metazoa</taxon>
        <taxon>Chordata</taxon>
        <taxon>Craniata</taxon>
        <taxon>Vertebrata</taxon>
        <taxon>Euteleostomi</taxon>
        <taxon>Amphibia</taxon>
        <taxon>Batrachia</taxon>
        <taxon>Anura</taxon>
        <taxon>Pipoidea</taxon>
        <taxon>Pipidae</taxon>
        <taxon>Xenopodinae</taxon>
        <taxon>Xenopus</taxon>
        <taxon>Xenopus</taxon>
    </lineage>
</organism>